<accession>Q6DK84</accession>
<gene>
    <name type="primary">nup85</name>
</gene>
<proteinExistence type="evidence at transcript level"/>
<evidence type="ECO:0000250" key="1">
    <source>
        <dbReference type="UniProtKB" id="Q9BW27"/>
    </source>
</evidence>
<evidence type="ECO:0000269" key="2">
    <source>
    </source>
</evidence>
<evidence type="ECO:0000305" key="3"/>
<name>NUP85_XENTR</name>
<protein>
    <recommendedName>
        <fullName>Nuclear pore complex protein Nup85</fullName>
    </recommendedName>
    <alternativeName>
        <fullName>85 kDa nucleoporin</fullName>
    </alternativeName>
    <alternativeName>
        <fullName>Nucleoporin Nup85</fullName>
    </alternativeName>
</protein>
<reference key="1">
    <citation type="submission" date="2004-06" db="EMBL/GenBank/DDBJ databases">
        <authorList>
            <consortium name="NIH - Xenopus Gene Collection (XGC) project"/>
        </authorList>
    </citation>
    <scope>NUCLEOTIDE SEQUENCE [LARGE SCALE MRNA]</scope>
    <source>
        <tissue>Embryo</tissue>
    </source>
</reference>
<reference key="2">
    <citation type="journal article" date="2018" name="J. Clin. Invest.">
        <title>Mutations in multiple components of the nuclear pore complex cause nephrotic syndrome.</title>
        <authorList>
            <person name="Braun D.A."/>
            <person name="Lovric S."/>
            <person name="Schapiro D."/>
            <person name="Schneider R."/>
            <person name="Marquez J."/>
            <person name="Asif M."/>
            <person name="Hussain M.S."/>
            <person name="Daga A."/>
            <person name="Widmeier E."/>
            <person name="Rao J."/>
            <person name="Ashraf S."/>
            <person name="Tan W."/>
            <person name="Lusk C.P."/>
            <person name="Kolb A."/>
            <person name="Jobst-Schwan T."/>
            <person name="Schmidt J.M."/>
            <person name="Hoogstraten C.A."/>
            <person name="Eddy K."/>
            <person name="Kitzler T.M."/>
            <person name="Shril S."/>
            <person name="Moawia A."/>
            <person name="Schrage K."/>
            <person name="Khayyat A.I.A."/>
            <person name="Lawson J.A."/>
            <person name="Gee H.Y."/>
            <person name="Warejko J.K."/>
            <person name="Hermle T."/>
            <person name="Majmundar A.J."/>
            <person name="Hugo H."/>
            <person name="Budde B."/>
            <person name="Motameny S."/>
            <person name="Altmueller J."/>
            <person name="Noegel A.A."/>
            <person name="Fathy H.M."/>
            <person name="Gale D.P."/>
            <person name="Waseem S.S."/>
            <person name="Khan A."/>
            <person name="Kerecuk L."/>
            <person name="Hashmi S."/>
            <person name="Mohebbi N."/>
            <person name="Ettenger R."/>
            <person name="Serdaroglu E."/>
            <person name="Alhasan K.A."/>
            <person name="Hashem M."/>
            <person name="Goncalves S."/>
            <person name="Ariceta G."/>
            <person name="Ubetagoyena M."/>
            <person name="Antonin W."/>
            <person name="Baig S.M."/>
            <person name="Alkuraya F.S."/>
            <person name="Shen Q."/>
            <person name="Xu H."/>
            <person name="Antignac C."/>
            <person name="Lifton R.P."/>
            <person name="Mane S."/>
            <person name="Nuernberg P."/>
            <person name="Khokha M.K."/>
            <person name="Hildebrandt F."/>
        </authorList>
    </citation>
    <scope>FUNCTION</scope>
    <scope>DISRUPTION PHENOTYPE</scope>
</reference>
<dbReference type="EMBL" id="BC074592">
    <property type="protein sequence ID" value="AAH74592.1"/>
    <property type="molecule type" value="mRNA"/>
</dbReference>
<dbReference type="RefSeq" id="NP_001004817.1">
    <property type="nucleotide sequence ID" value="NM_001004817.1"/>
</dbReference>
<dbReference type="SMR" id="Q6DK84"/>
<dbReference type="FunCoup" id="Q6DK84">
    <property type="interactions" value="4102"/>
</dbReference>
<dbReference type="STRING" id="8364.ENSXETP00000046963"/>
<dbReference type="PaxDb" id="8364-ENSXETP00000056747"/>
<dbReference type="DNASU" id="448067"/>
<dbReference type="GeneID" id="448067"/>
<dbReference type="KEGG" id="xtr:448067"/>
<dbReference type="AGR" id="Xenbase:XB-GENE-1008050"/>
<dbReference type="CTD" id="79902"/>
<dbReference type="Xenbase" id="XB-GENE-1008050">
    <property type="gene designation" value="nup85"/>
</dbReference>
<dbReference type="eggNOG" id="KOG2271">
    <property type="taxonomic scope" value="Eukaryota"/>
</dbReference>
<dbReference type="HOGENOM" id="CLU_027342_0_0_1"/>
<dbReference type="InParanoid" id="Q6DK84"/>
<dbReference type="OMA" id="ELMEWLN"/>
<dbReference type="OrthoDB" id="17644at2759"/>
<dbReference type="PhylomeDB" id="Q6DK84"/>
<dbReference type="TreeFam" id="TF323240"/>
<dbReference type="Reactome" id="R-XTR-141444">
    <property type="pathway name" value="Amplification of signal from unattached kinetochores via a MAD2 inhibitory signal"/>
</dbReference>
<dbReference type="Reactome" id="R-XTR-170822">
    <property type="pathway name" value="Regulation of Glucokinase by Glucokinase Regulatory Protein"/>
</dbReference>
<dbReference type="Reactome" id="R-XTR-2467813">
    <property type="pathway name" value="Separation of Sister Chromatids"/>
</dbReference>
<dbReference type="Reactome" id="R-XTR-2500257">
    <property type="pathway name" value="Resolution of Sister Chromatid Cohesion"/>
</dbReference>
<dbReference type="Reactome" id="R-XTR-3108214">
    <property type="pathway name" value="SUMOylation of DNA damage response and repair proteins"/>
</dbReference>
<dbReference type="Reactome" id="R-XTR-3232142">
    <property type="pathway name" value="SUMOylation of ubiquitinylation proteins"/>
</dbReference>
<dbReference type="Reactome" id="R-XTR-3301854">
    <property type="pathway name" value="Nuclear Pore Complex (NPC) Disassembly"/>
</dbReference>
<dbReference type="Reactome" id="R-XTR-3371453">
    <property type="pathway name" value="Regulation of HSF1-mediated heat shock response"/>
</dbReference>
<dbReference type="Reactome" id="R-XTR-4085377">
    <property type="pathway name" value="SUMOylation of SUMOylation proteins"/>
</dbReference>
<dbReference type="Reactome" id="R-XTR-4570464">
    <property type="pathway name" value="SUMOylation of RNA binding proteins"/>
</dbReference>
<dbReference type="Reactome" id="R-XTR-4615885">
    <property type="pathway name" value="SUMOylation of DNA replication proteins"/>
</dbReference>
<dbReference type="Reactome" id="R-XTR-5663220">
    <property type="pathway name" value="RHO GTPases Activate Formins"/>
</dbReference>
<dbReference type="Reactome" id="R-XTR-68877">
    <property type="pathway name" value="Mitotic Prometaphase"/>
</dbReference>
<dbReference type="Reactome" id="R-XTR-9615933">
    <property type="pathway name" value="Postmitotic nuclear pore complex (NPC) reformation"/>
</dbReference>
<dbReference type="Reactome" id="R-XTR-9648025">
    <property type="pathway name" value="EML4 and NUDC in mitotic spindle formation"/>
</dbReference>
<dbReference type="Proteomes" id="UP000008143">
    <property type="component" value="Chromosome 10"/>
</dbReference>
<dbReference type="Bgee" id="ENSXETG00000027060">
    <property type="expression patterns" value="Expressed in gastrula and 13 other cell types or tissues"/>
</dbReference>
<dbReference type="GO" id="GO:0031965">
    <property type="term" value="C:nuclear membrane"/>
    <property type="evidence" value="ECO:0007669"/>
    <property type="project" value="UniProtKB-SubCell"/>
</dbReference>
<dbReference type="GO" id="GO:0031080">
    <property type="term" value="C:nuclear pore outer ring"/>
    <property type="evidence" value="ECO:0000250"/>
    <property type="project" value="UniProtKB"/>
</dbReference>
<dbReference type="GO" id="GO:0051028">
    <property type="term" value="P:mRNA transport"/>
    <property type="evidence" value="ECO:0007669"/>
    <property type="project" value="UniProtKB-KW"/>
</dbReference>
<dbReference type="GO" id="GO:0072006">
    <property type="term" value="P:nephron development"/>
    <property type="evidence" value="ECO:0000315"/>
    <property type="project" value="UniProtKB"/>
</dbReference>
<dbReference type="GO" id="GO:0015031">
    <property type="term" value="P:protein transport"/>
    <property type="evidence" value="ECO:0007669"/>
    <property type="project" value="UniProtKB-KW"/>
</dbReference>
<dbReference type="InterPro" id="IPR011502">
    <property type="entry name" value="Nucleoporin_Nup85"/>
</dbReference>
<dbReference type="PANTHER" id="PTHR13373">
    <property type="entry name" value="FROUNT PROTEIN-RELATED"/>
    <property type="match status" value="1"/>
</dbReference>
<dbReference type="PANTHER" id="PTHR13373:SF21">
    <property type="entry name" value="NUCLEAR PORE COMPLEX PROTEIN NUP85"/>
    <property type="match status" value="1"/>
</dbReference>
<dbReference type="Pfam" id="PF07575">
    <property type="entry name" value="Nucleopor_Nup85"/>
    <property type="match status" value="1"/>
</dbReference>
<organism>
    <name type="scientific">Xenopus tropicalis</name>
    <name type="common">Western clawed frog</name>
    <name type="synonym">Silurana tropicalis</name>
    <dbReference type="NCBI Taxonomy" id="8364"/>
    <lineage>
        <taxon>Eukaryota</taxon>
        <taxon>Metazoa</taxon>
        <taxon>Chordata</taxon>
        <taxon>Craniata</taxon>
        <taxon>Vertebrata</taxon>
        <taxon>Euteleostomi</taxon>
        <taxon>Amphibia</taxon>
        <taxon>Batrachia</taxon>
        <taxon>Anura</taxon>
        <taxon>Pipoidea</taxon>
        <taxon>Pipidae</taxon>
        <taxon>Xenopodinae</taxon>
        <taxon>Xenopus</taxon>
        <taxon>Silurana</taxon>
    </lineage>
</organism>
<feature type="chain" id="PRO_0000324191" description="Nuclear pore complex protein Nup85">
    <location>
        <begin position="1"/>
        <end position="653"/>
    </location>
</feature>
<keyword id="KW-0472">Membrane</keyword>
<keyword id="KW-0509">mRNA transport</keyword>
<keyword id="KW-0906">Nuclear pore complex</keyword>
<keyword id="KW-0539">Nucleus</keyword>
<keyword id="KW-0653">Protein transport</keyword>
<keyword id="KW-1185">Reference proteome</keyword>
<keyword id="KW-0811">Translocation</keyword>
<keyword id="KW-0813">Transport</keyword>
<sequence length="653" mass="74918">MEELDVDPAETPIPGLGQQNRHIGFSWGPGDLLLYETLYQKQGSETAARCPFMYLVRSDEDIYSPVLRKLFNESHSIFVGLQKSAEENAGKSRKAQLVQVSRNYRSVLRACMEEMHALSESTREPSQNTKYISQISILSAMELSWNLCEILFIESAPAGPLLILLLDWVRLHVCEVDNIVQDVLRSERPTEHEKFWDGVTGYVLQGRMNEARQLLAKEASSSVSARSMCRVLDDLLKKMPMLNTAGTQTLTEFELKWQHWREECERHLQNGTFSSNPHMEVVCRVLVGDEEVILEKRDLMTTWYHFLVSRLLFKHPTVKPTELHFYAQSSLDMFLAGNSSPEPLDNILLAAFEFDIHQVIKEFSIVSSNWWFVAHLTDLLDHCQLFQAHNLYFGANMREFLLLDYASGLFSHHSLWQLGVDYFDYCPNLGHVYLELHMERVPLNTEKKALKALRICEKRQMTEQVRSICKTMAMQSLCNGRLGSALSWSIRAKDAAFATLISDRFLKEYSERGNFTDLDLIDNLGSAMLLSDRLTFLGKYREFHRMYSQEQFSEAASLLLSLMTARIAPCSFWLTLLLDALPLLEQKQVIFSAEQTYELMRCLEDRMAAKLDSTSPDEIQKQDSVDSTKIEMLRLALARNLARAIVTEGALQE</sequence>
<comment type="function">
    <text evidence="1 2">Component of the nuclear pore complex (NPC) that seems to be required for NPC assembly and maintenance (By similarity). Involved in nephrogenesis (PubMed:30179222).</text>
</comment>
<comment type="subunit">
    <text evidence="1">Component of the nuclear pore complex (NPC).</text>
</comment>
<comment type="subcellular location">
    <subcellularLocation>
        <location evidence="1">Nucleus</location>
        <location evidence="1">Nuclear pore complex</location>
    </subcellularLocation>
    <subcellularLocation>
        <location evidence="1">Nucleus membrane</location>
    </subcellularLocation>
</comment>
<comment type="disruption phenotype">
    <text evidence="2">Morpholino knockdown of nup85 results in abnormal pronephric development characterized by underdeveloped to completely absent pronephros.</text>
</comment>
<comment type="similarity">
    <text evidence="3">Belongs to the nucleoporin Nup85 family.</text>
</comment>